<name>IOLA2_OCEIH</name>
<comment type="function">
    <text evidence="1">Catalyzes the oxidation of malonate semialdehyde (MSA) and methylmalonate semialdehyde (MMSA) into acetyl-CoA and propanoyl-CoA, respectively. Is involved in a myo-inositol catabolic pathway. Bicarbonate, and not CO2, is the end-product of the enzymatic reaction.</text>
</comment>
<comment type="catalytic activity">
    <reaction evidence="1">
        <text>3-oxopropanoate + NAD(+) + CoA + H2O = hydrogencarbonate + acetyl-CoA + NADH + H(+)</text>
        <dbReference type="Rhea" id="RHEA:76615"/>
        <dbReference type="ChEBI" id="CHEBI:15377"/>
        <dbReference type="ChEBI" id="CHEBI:15378"/>
        <dbReference type="ChEBI" id="CHEBI:17544"/>
        <dbReference type="ChEBI" id="CHEBI:33190"/>
        <dbReference type="ChEBI" id="CHEBI:57287"/>
        <dbReference type="ChEBI" id="CHEBI:57288"/>
        <dbReference type="ChEBI" id="CHEBI:57540"/>
        <dbReference type="ChEBI" id="CHEBI:57945"/>
        <dbReference type="EC" id="1.2.1.27"/>
    </reaction>
    <physiologicalReaction direction="left-to-right" evidence="1">
        <dbReference type="Rhea" id="RHEA:76616"/>
    </physiologicalReaction>
</comment>
<comment type="catalytic activity">
    <reaction evidence="1">
        <text>2-methyl-3-oxopropanoate + NAD(+) + CoA + H2O = propanoyl-CoA + hydrogencarbonate + NADH + H(+)</text>
        <dbReference type="Rhea" id="RHEA:20804"/>
        <dbReference type="ChEBI" id="CHEBI:15377"/>
        <dbReference type="ChEBI" id="CHEBI:15378"/>
        <dbReference type="ChEBI" id="CHEBI:17544"/>
        <dbReference type="ChEBI" id="CHEBI:57287"/>
        <dbReference type="ChEBI" id="CHEBI:57392"/>
        <dbReference type="ChEBI" id="CHEBI:57540"/>
        <dbReference type="ChEBI" id="CHEBI:57700"/>
        <dbReference type="ChEBI" id="CHEBI:57945"/>
        <dbReference type="EC" id="1.2.1.27"/>
    </reaction>
    <physiologicalReaction direction="left-to-right" evidence="1">
        <dbReference type="Rhea" id="RHEA:20805"/>
    </physiologicalReaction>
</comment>
<comment type="pathway">
    <text evidence="1">Polyol metabolism; myo-inositol degradation into acetyl-CoA; acetyl-CoA from myo-inositol: step 7/7.</text>
</comment>
<comment type="subunit">
    <text evidence="1">Homotetramer.</text>
</comment>
<comment type="similarity">
    <text evidence="1">Belongs to the aldehyde dehydrogenase family. IolA subfamily.</text>
</comment>
<dbReference type="EC" id="1.2.1.27" evidence="1"/>
<dbReference type="EMBL" id="BA000028">
    <property type="protein sequence ID" value="BAC14692.1"/>
    <property type="molecule type" value="Genomic_DNA"/>
</dbReference>
<dbReference type="RefSeq" id="WP_011067130.1">
    <property type="nucleotide sequence ID" value="NC_004193.1"/>
</dbReference>
<dbReference type="SMR" id="Q8EMV4"/>
<dbReference type="STRING" id="221109.gene:10734988"/>
<dbReference type="KEGG" id="oih:OB2736"/>
<dbReference type="eggNOG" id="COG1012">
    <property type="taxonomic scope" value="Bacteria"/>
</dbReference>
<dbReference type="HOGENOM" id="CLU_005391_1_10_9"/>
<dbReference type="OrthoDB" id="9762913at2"/>
<dbReference type="PhylomeDB" id="Q8EMV4"/>
<dbReference type="UniPathway" id="UPA00076">
    <property type="reaction ID" value="UER00148"/>
</dbReference>
<dbReference type="Proteomes" id="UP000000822">
    <property type="component" value="Chromosome"/>
</dbReference>
<dbReference type="GO" id="GO:0018478">
    <property type="term" value="F:malonate-semialdehyde dehydrogenase (acetylating) activity"/>
    <property type="evidence" value="ECO:0007669"/>
    <property type="project" value="UniProtKB-UniRule"/>
</dbReference>
<dbReference type="GO" id="GO:0004491">
    <property type="term" value="F:methylmalonate-semialdehyde dehydrogenase (acylating, NAD) activity"/>
    <property type="evidence" value="ECO:0007669"/>
    <property type="project" value="UniProtKB-UniRule"/>
</dbReference>
<dbReference type="GO" id="GO:0019310">
    <property type="term" value="P:inositol catabolic process"/>
    <property type="evidence" value="ECO:0007669"/>
    <property type="project" value="UniProtKB-UniRule"/>
</dbReference>
<dbReference type="GO" id="GO:0006210">
    <property type="term" value="P:thymine catabolic process"/>
    <property type="evidence" value="ECO:0007669"/>
    <property type="project" value="TreeGrafter"/>
</dbReference>
<dbReference type="GO" id="GO:0006574">
    <property type="term" value="P:valine catabolic process"/>
    <property type="evidence" value="ECO:0007669"/>
    <property type="project" value="TreeGrafter"/>
</dbReference>
<dbReference type="CDD" id="cd07085">
    <property type="entry name" value="ALDH_F6_MMSDH"/>
    <property type="match status" value="1"/>
</dbReference>
<dbReference type="FunFam" id="3.40.309.10:FF:000002">
    <property type="entry name" value="Methylmalonate-semialdehyde dehydrogenase (Acylating)"/>
    <property type="match status" value="1"/>
</dbReference>
<dbReference type="FunFam" id="3.40.605.10:FF:000003">
    <property type="entry name" value="Methylmalonate-semialdehyde dehydrogenase [acylating]"/>
    <property type="match status" value="1"/>
</dbReference>
<dbReference type="Gene3D" id="3.40.605.10">
    <property type="entry name" value="Aldehyde Dehydrogenase, Chain A, domain 1"/>
    <property type="match status" value="1"/>
</dbReference>
<dbReference type="Gene3D" id="3.40.309.10">
    <property type="entry name" value="Aldehyde Dehydrogenase, Chain A, domain 2"/>
    <property type="match status" value="1"/>
</dbReference>
<dbReference type="HAMAP" id="MF_01670">
    <property type="entry name" value="IolA"/>
    <property type="match status" value="1"/>
</dbReference>
<dbReference type="InterPro" id="IPR016161">
    <property type="entry name" value="Ald_DH/histidinol_DH"/>
</dbReference>
<dbReference type="InterPro" id="IPR016163">
    <property type="entry name" value="Ald_DH_C"/>
</dbReference>
<dbReference type="InterPro" id="IPR016160">
    <property type="entry name" value="Ald_DH_CS_CYS"/>
</dbReference>
<dbReference type="InterPro" id="IPR016162">
    <property type="entry name" value="Ald_DH_N"/>
</dbReference>
<dbReference type="InterPro" id="IPR015590">
    <property type="entry name" value="Aldehyde_DH_dom"/>
</dbReference>
<dbReference type="InterPro" id="IPR010061">
    <property type="entry name" value="MeMal-semiAld_DH"/>
</dbReference>
<dbReference type="InterPro" id="IPR023510">
    <property type="entry name" value="MSDH_GmP_bac"/>
</dbReference>
<dbReference type="NCBIfam" id="TIGR01722">
    <property type="entry name" value="MMSDH"/>
    <property type="match status" value="1"/>
</dbReference>
<dbReference type="PANTHER" id="PTHR43866">
    <property type="entry name" value="MALONATE-SEMIALDEHYDE DEHYDROGENASE"/>
    <property type="match status" value="1"/>
</dbReference>
<dbReference type="PANTHER" id="PTHR43866:SF4">
    <property type="entry name" value="MALONATE-SEMIALDEHYDE DEHYDROGENASE"/>
    <property type="match status" value="1"/>
</dbReference>
<dbReference type="Pfam" id="PF00171">
    <property type="entry name" value="Aldedh"/>
    <property type="match status" value="1"/>
</dbReference>
<dbReference type="SUPFAM" id="SSF53720">
    <property type="entry name" value="ALDH-like"/>
    <property type="match status" value="1"/>
</dbReference>
<dbReference type="PROSITE" id="PS00070">
    <property type="entry name" value="ALDEHYDE_DEHYDR_CYS"/>
    <property type="match status" value="1"/>
</dbReference>
<organism>
    <name type="scientific">Oceanobacillus iheyensis (strain DSM 14371 / CIP 107618 / JCM 11309 / KCTC 3954 / HTE831)</name>
    <dbReference type="NCBI Taxonomy" id="221109"/>
    <lineage>
        <taxon>Bacteria</taxon>
        <taxon>Bacillati</taxon>
        <taxon>Bacillota</taxon>
        <taxon>Bacilli</taxon>
        <taxon>Bacillales</taxon>
        <taxon>Bacillaceae</taxon>
        <taxon>Oceanobacillus</taxon>
    </lineage>
</organism>
<evidence type="ECO:0000255" key="1">
    <source>
        <dbReference type="HAMAP-Rule" id="MF_01670"/>
    </source>
</evidence>
<accession>Q8EMV4</accession>
<gene>
    <name evidence="1" type="primary">iolA2</name>
    <name type="ordered locus">OB2736</name>
</gene>
<feature type="chain" id="PRO_0000352349" description="Malonate-semialdehyde dehydrogenase 2">
    <location>
        <begin position="1"/>
        <end position="486"/>
    </location>
</feature>
<feature type="active site" description="Nucleophile" evidence="1">
    <location>
        <position position="286"/>
    </location>
</feature>
<feature type="binding site" evidence="1">
    <location>
        <position position="154"/>
    </location>
    <ligand>
        <name>NAD(+)</name>
        <dbReference type="ChEBI" id="CHEBI:57540"/>
    </ligand>
</feature>
<feature type="binding site" evidence="1">
    <location>
        <position position="178"/>
    </location>
    <ligand>
        <name>NAD(+)</name>
        <dbReference type="ChEBI" id="CHEBI:57540"/>
    </ligand>
</feature>
<feature type="binding site" evidence="1">
    <location>
        <position position="181"/>
    </location>
    <ligand>
        <name>NAD(+)</name>
        <dbReference type="ChEBI" id="CHEBI:57540"/>
    </ligand>
</feature>
<feature type="binding site" evidence="1">
    <location>
        <position position="182"/>
    </location>
    <ligand>
        <name>NAD(+)</name>
        <dbReference type="ChEBI" id="CHEBI:57540"/>
    </ligand>
</feature>
<feature type="binding site" evidence="1">
    <location>
        <position position="231"/>
    </location>
    <ligand>
        <name>NAD(+)</name>
        <dbReference type="ChEBI" id="CHEBI:57540"/>
    </ligand>
</feature>
<feature type="binding site" evidence="1">
    <location>
        <position position="386"/>
    </location>
    <ligand>
        <name>NAD(+)</name>
        <dbReference type="ChEBI" id="CHEBI:57540"/>
    </ligand>
</feature>
<reference key="1">
    <citation type="journal article" date="2002" name="Nucleic Acids Res.">
        <title>Genome sequence of Oceanobacillus iheyensis isolated from the Iheya Ridge and its unexpected adaptive capabilities to extreme environments.</title>
        <authorList>
            <person name="Takami H."/>
            <person name="Takaki Y."/>
            <person name="Uchiyama I."/>
        </authorList>
    </citation>
    <scope>NUCLEOTIDE SEQUENCE [LARGE SCALE GENOMIC DNA]</scope>
    <source>
        <strain>DSM 14371 / CIP 107618 / JCM 11309 / KCTC 3954 / HTE831</strain>
    </source>
</reference>
<sequence length="486" mass="53503">MTQTTVKNVKNYIGGEWIESRTEKTEDVFNPATGEVIAQVPISTTEDVHHAIEVANEAFKTWKEVPVPKRARILFKYQQLLVEHWEELAKLITLENGKNYAEAYGEVQRGIENVEFATGAPSLMMGEQLASIATELESGVYRYPIGVIGGITPFNFPMMVPCWMFPMAIATGNTFVMKPSERTPLLANRLAELLEEAGLPNGVFNIVHGAHDVVNGLLDHKKVAAISFVGSQPVAEYVYKRGTQNLKRVQALAGAKNHSIVLSDANLENATTQILNAAFGSAGERCMAASVVAVEEDVADEFVTLLTQKANEIKIGNGLDEGVFLGPVIRDQHKERTLQYIESGEEEGANLVRDGRTDEAAKQEGYFVGPTIFDHVTSEMKIWQDEIFAPVLSIARVNNLEEGVDLANESRFANGACIFTRDGGSVRRFRETIDAGMLGVNIGVPAPMAFLPFSGWKDSFYGDLHANGKDGLQFYTRKKVLTTKWV</sequence>
<keyword id="KW-0520">NAD</keyword>
<keyword id="KW-0560">Oxidoreductase</keyword>
<keyword id="KW-1185">Reference proteome</keyword>
<protein>
    <recommendedName>
        <fullName evidence="1">Malonate-semialdehyde dehydrogenase 2</fullName>
        <shortName evidence="1">MSA dehydrogenase 2</shortName>
        <ecNumber evidence="1">1.2.1.27</ecNumber>
    </recommendedName>
    <alternativeName>
        <fullName evidence="1">Methylmalonate-semialdehyde dehydrogenase 2</fullName>
        <shortName evidence="1">MMSA dehydrogenase 2</shortName>
        <shortName evidence="1">MSDH 2</shortName>
    </alternativeName>
</protein>
<proteinExistence type="inferred from homology"/>